<gene>
    <name evidence="5" type="primary">pho-5</name>
    <name evidence="7" type="ORF">NCU08325</name>
</gene>
<reference key="1">
    <citation type="journal article" date="1995" name="Gene">
        <title>A phosphate-repressible, high-affinity phosphate permease is encoded by the pho-5+ gene of Neurospora crassa.</title>
        <authorList>
            <person name="Versaw W.K."/>
        </authorList>
    </citation>
    <scope>NUCLEOTIDE SEQUENCE [GENOMIC DNA]</scope>
    <scope>INDUCTION</scope>
    <scope>DISRUPTION PHENOTYPE</scope>
    <source>
        <strain>59-29</strain>
    </source>
</reference>
<reference key="2">
    <citation type="journal article" date="2003" name="Nature">
        <title>The genome sequence of the filamentous fungus Neurospora crassa.</title>
        <authorList>
            <person name="Galagan J.E."/>
            <person name="Calvo S.E."/>
            <person name="Borkovich K.A."/>
            <person name="Selker E.U."/>
            <person name="Read N.D."/>
            <person name="Jaffe D.B."/>
            <person name="FitzHugh W."/>
            <person name="Ma L.-J."/>
            <person name="Smirnov S."/>
            <person name="Purcell S."/>
            <person name="Rehman B."/>
            <person name="Elkins T."/>
            <person name="Engels R."/>
            <person name="Wang S."/>
            <person name="Nielsen C.B."/>
            <person name="Butler J."/>
            <person name="Endrizzi M."/>
            <person name="Qui D."/>
            <person name="Ianakiev P."/>
            <person name="Bell-Pedersen D."/>
            <person name="Nelson M.A."/>
            <person name="Werner-Washburne M."/>
            <person name="Selitrennikoff C.P."/>
            <person name="Kinsey J.A."/>
            <person name="Braun E.L."/>
            <person name="Zelter A."/>
            <person name="Schulte U."/>
            <person name="Kothe G.O."/>
            <person name="Jedd G."/>
            <person name="Mewes H.-W."/>
            <person name="Staben C."/>
            <person name="Marcotte E."/>
            <person name="Greenberg D."/>
            <person name="Roy A."/>
            <person name="Foley K."/>
            <person name="Naylor J."/>
            <person name="Stange-Thomann N."/>
            <person name="Barrett R."/>
            <person name="Gnerre S."/>
            <person name="Kamal M."/>
            <person name="Kamvysselis M."/>
            <person name="Mauceli E.W."/>
            <person name="Bielke C."/>
            <person name="Rudd S."/>
            <person name="Frishman D."/>
            <person name="Krystofova S."/>
            <person name="Rasmussen C."/>
            <person name="Metzenberg R.L."/>
            <person name="Perkins D.D."/>
            <person name="Kroken S."/>
            <person name="Cogoni C."/>
            <person name="Macino G."/>
            <person name="Catcheside D.E.A."/>
            <person name="Li W."/>
            <person name="Pratt R.J."/>
            <person name="Osmani S.A."/>
            <person name="DeSouza C.P.C."/>
            <person name="Glass N.L."/>
            <person name="Orbach M.J."/>
            <person name="Berglund J.A."/>
            <person name="Voelker R."/>
            <person name="Yarden O."/>
            <person name="Plamann M."/>
            <person name="Seiler S."/>
            <person name="Dunlap J.C."/>
            <person name="Radford A."/>
            <person name="Aramayo R."/>
            <person name="Natvig D.O."/>
            <person name="Alex L.A."/>
            <person name="Mannhaupt G."/>
            <person name="Ebbole D.J."/>
            <person name="Freitag M."/>
            <person name="Paulsen I."/>
            <person name="Sachs M.S."/>
            <person name="Lander E.S."/>
            <person name="Nusbaum C."/>
            <person name="Birren B.W."/>
        </authorList>
    </citation>
    <scope>NUCLEOTIDE SEQUENCE [LARGE SCALE GENOMIC DNA]</scope>
    <source>
        <strain>ATCC 24698 / 74-OR23-1A / CBS 708.71 / DSM 1257 / FGSC 987</strain>
    </source>
</reference>
<reference key="3">
    <citation type="journal article" date="1995" name="Proc. Natl. Acad. Sci. U.S.A.">
        <title>Repressible cation-phosphate symporters in Neurospora crassa.</title>
        <authorList>
            <person name="Versaw W.K."/>
            <person name="Metzenberg R.L."/>
        </authorList>
    </citation>
    <scope>FUNCTION</scope>
    <scope>BIOPHYSICOCHEMICAL PROPERTIES</scope>
    <scope>ACTIVITY REGULATION</scope>
</reference>
<dbReference type="EMBL" id="L36127">
    <property type="protein sequence ID" value="AAA74899.1"/>
    <property type="status" value="ALT_FRAME"/>
    <property type="molecule type" value="Genomic_DNA"/>
</dbReference>
<dbReference type="EMBL" id="CM002239">
    <property type="protein sequence ID" value="EAA33302.2"/>
    <property type="molecule type" value="Genomic_DNA"/>
</dbReference>
<dbReference type="RefSeq" id="XP_962538.2">
    <property type="nucleotide sequence ID" value="XM_957445.3"/>
</dbReference>
<dbReference type="SMR" id="Q7RVX9"/>
<dbReference type="FunCoup" id="Q7RVX9">
    <property type="interactions" value="764"/>
</dbReference>
<dbReference type="STRING" id="367110.Q7RVX9"/>
<dbReference type="TCDB" id="2.A.1.9.2">
    <property type="family name" value="the major facilitator superfamily (mfs)"/>
</dbReference>
<dbReference type="PaxDb" id="5141-EFNCRP00000008440"/>
<dbReference type="EnsemblFungi" id="EAA33302">
    <property type="protein sequence ID" value="EAA33302"/>
    <property type="gene ID" value="NCU08325"/>
</dbReference>
<dbReference type="GeneID" id="3878688"/>
<dbReference type="KEGG" id="ncr:NCU08325"/>
<dbReference type="VEuPathDB" id="FungiDB:NCU08325"/>
<dbReference type="HOGENOM" id="CLU_001265_46_14_1"/>
<dbReference type="InParanoid" id="Q7RVX9"/>
<dbReference type="OMA" id="DKMWRVV"/>
<dbReference type="OrthoDB" id="433512at2759"/>
<dbReference type="Proteomes" id="UP000001805">
    <property type="component" value="Chromosome 4, Linkage Group IV"/>
</dbReference>
<dbReference type="GO" id="GO:0005886">
    <property type="term" value="C:plasma membrane"/>
    <property type="evidence" value="ECO:0007669"/>
    <property type="project" value="UniProtKB-SubCell"/>
</dbReference>
<dbReference type="GO" id="GO:0005315">
    <property type="term" value="F:phosphate transmembrane transporter activity"/>
    <property type="evidence" value="ECO:0007669"/>
    <property type="project" value="InterPro"/>
</dbReference>
<dbReference type="GO" id="GO:0015293">
    <property type="term" value="F:symporter activity"/>
    <property type="evidence" value="ECO:0007669"/>
    <property type="project" value="UniProtKB-KW"/>
</dbReference>
<dbReference type="GO" id="GO:0006817">
    <property type="term" value="P:phosphate ion transport"/>
    <property type="evidence" value="ECO:0007669"/>
    <property type="project" value="UniProtKB-KW"/>
</dbReference>
<dbReference type="CDD" id="cd17364">
    <property type="entry name" value="MFS_PhT"/>
    <property type="match status" value="1"/>
</dbReference>
<dbReference type="Gene3D" id="1.20.1250.20">
    <property type="entry name" value="MFS general substrate transporter like domains"/>
    <property type="match status" value="2"/>
</dbReference>
<dbReference type="InterPro" id="IPR020846">
    <property type="entry name" value="MFS_dom"/>
</dbReference>
<dbReference type="InterPro" id="IPR005828">
    <property type="entry name" value="MFS_sugar_transport-like"/>
</dbReference>
<dbReference type="InterPro" id="IPR036259">
    <property type="entry name" value="MFS_trans_sf"/>
</dbReference>
<dbReference type="InterPro" id="IPR004738">
    <property type="entry name" value="Phos_permease"/>
</dbReference>
<dbReference type="InterPro" id="IPR005829">
    <property type="entry name" value="Sugar_transporter_CS"/>
</dbReference>
<dbReference type="NCBIfam" id="TIGR00887">
    <property type="entry name" value="2A0109"/>
    <property type="match status" value="1"/>
</dbReference>
<dbReference type="PANTHER" id="PTHR24064">
    <property type="entry name" value="SOLUTE CARRIER FAMILY 22 MEMBER"/>
    <property type="match status" value="1"/>
</dbReference>
<dbReference type="Pfam" id="PF00083">
    <property type="entry name" value="Sugar_tr"/>
    <property type="match status" value="1"/>
</dbReference>
<dbReference type="SUPFAM" id="SSF103473">
    <property type="entry name" value="MFS general substrate transporter"/>
    <property type="match status" value="1"/>
</dbReference>
<dbReference type="PROSITE" id="PS50850">
    <property type="entry name" value="MFS"/>
    <property type="match status" value="1"/>
</dbReference>
<dbReference type="PROSITE" id="PS00217">
    <property type="entry name" value="SUGAR_TRANSPORT_2"/>
    <property type="match status" value="1"/>
</dbReference>
<evidence type="ECO:0000255" key="1"/>
<evidence type="ECO:0000256" key="2">
    <source>
        <dbReference type="SAM" id="MobiDB-lite"/>
    </source>
</evidence>
<evidence type="ECO:0000269" key="3">
    <source>
    </source>
</evidence>
<evidence type="ECO:0000269" key="4">
    <source>
    </source>
</evidence>
<evidence type="ECO:0000303" key="5">
    <source>
    </source>
</evidence>
<evidence type="ECO:0000305" key="6"/>
<evidence type="ECO:0000312" key="7">
    <source>
        <dbReference type="EMBL" id="EAA33302.2"/>
    </source>
</evidence>
<accession>Q7RVX9</accession>
<accession>Q01395</accession>
<organism>
    <name type="scientific">Neurospora crassa (strain ATCC 24698 / 74-OR23-1A / CBS 708.71 / DSM 1257 / FGSC 987)</name>
    <dbReference type="NCBI Taxonomy" id="367110"/>
    <lineage>
        <taxon>Eukaryota</taxon>
        <taxon>Fungi</taxon>
        <taxon>Dikarya</taxon>
        <taxon>Ascomycota</taxon>
        <taxon>Pezizomycotina</taxon>
        <taxon>Sordariomycetes</taxon>
        <taxon>Sordariomycetidae</taxon>
        <taxon>Sordariales</taxon>
        <taxon>Sordariaceae</taxon>
        <taxon>Neurospora</taxon>
    </lineage>
</organism>
<keyword id="KW-1003">Cell membrane</keyword>
<keyword id="KW-0472">Membrane</keyword>
<keyword id="KW-0592">Phosphate transport</keyword>
<keyword id="KW-1185">Reference proteome</keyword>
<keyword id="KW-0769">Symport</keyword>
<keyword id="KW-0812">Transmembrane</keyword>
<keyword id="KW-1133">Transmembrane helix</keyword>
<keyword id="KW-0813">Transport</keyword>
<proteinExistence type="evidence at protein level"/>
<name>PHO5_NEUCR</name>
<comment type="function">
    <text evidence="3">High-affinity transporter for external inorganic phosphate. Acts probably as a H(+)-phosphate symporter.</text>
</comment>
<comment type="activity regulation">
    <text evidence="3">Phosphate transport activity is competitively inhibited by arsenate.</text>
</comment>
<comment type="biophysicochemical properties">
    <kinetics>
        <KM evidence="3">37.4 uM for phosphate</KM>
        <Vmax evidence="3">26.1 nmol/min/mg enzyme</Vmax>
    </kinetics>
</comment>
<comment type="subcellular location">
    <subcellularLocation>
        <location evidence="6">Cell membrane</location>
        <topology evidence="1">Multi-pass membrane protein</topology>
    </subcellularLocation>
</comment>
<comment type="induction">
    <text evidence="4">Transcription is controlled by the phosphorus-acquisition regulatory system.</text>
</comment>
<comment type="disruption phenotype">
    <text evidence="4">Impairs growth at low phosphate conditions when pho-4 is also absent.</text>
</comment>
<comment type="similarity">
    <text evidence="6">Belongs to the major facilitator superfamily. Sugar transporter (TC 2.A.1.1) family.</text>
</comment>
<comment type="sequence caution" evidence="6">
    <conflict type="frameshift">
        <sequence resource="EMBL-CDS" id="AAA74899"/>
    </conflict>
</comment>
<sequence length="570" mass="61702">MSTPQKTAGGNNAYHNFYNDFLHIKDPNERRRLALAEVDRAPFGWYHVRAVAVAGVGFFTDSYDIFTVSLLTLMLGIVYFPGEGKMPTTSDTAIKLATSAGTVIGQVGFGAAADVFGRKSMYGLELLFIIFATLAQALASGSPSINIIGIIIFWRVLMGVGIGGDYPLSSIITSEFATTKWRGAMMGAVFAMQGLGQLAAAFVMLFVTLGFKKSLEAAPTLASCTGDCAVAVDKMWRTVIGVGAVPGCIALYYRLTIPETPRYTFDVKRDVEQASDDIEAFKTGKPKGQPDEATRIVAKQEAEKEMEIPKASWGDFFRHYSKRKNAMLLAGTALSWCFLDIAYYGVSLNNATILNVIGYSTTGAKNTYEILYNTAVGNLIIVLAGAVPGYWVTVFTVDTVGRKPIQFMGFGILTILFVVMGFAYKHLSPHALLAIFVLAQFFFNFGPNATTFIVPGEVFPTRYRSTSHGLSAAMGKIGSIIGQGAIAPLRTRGAVKGGNPNPWMNHVLEIYALFMLLGVGTTFLIPETKRKTLEELSGEFDMSGEEEAQRDTTLTEHKTEAPTSSAAVNA</sequence>
<feature type="chain" id="PRO_0000431098" description="Repressible high-affinity phosphate permease">
    <location>
        <begin position="1"/>
        <end position="570"/>
    </location>
</feature>
<feature type="topological domain" description="Cytoplasmic" evidence="6">
    <location>
        <begin position="1"/>
        <end position="61"/>
    </location>
</feature>
<feature type="transmembrane region" description="Helical; Name=1" evidence="1">
    <location>
        <begin position="62"/>
        <end position="82"/>
    </location>
</feature>
<feature type="topological domain" description="Extracellular" evidence="6">
    <location>
        <begin position="83"/>
        <end position="95"/>
    </location>
</feature>
<feature type="transmembrane region" description="Helical; Name=2" evidence="1">
    <location>
        <begin position="96"/>
        <end position="116"/>
    </location>
</feature>
<feature type="topological domain" description="Cytoplasmic" evidence="6">
    <location>
        <begin position="117"/>
        <end position="120"/>
    </location>
</feature>
<feature type="transmembrane region" description="Helical; Name=3" evidence="1">
    <location>
        <begin position="121"/>
        <end position="141"/>
    </location>
</feature>
<feature type="topological domain" description="Extracellular" evidence="6">
    <location>
        <begin position="142"/>
        <end position="143"/>
    </location>
</feature>
<feature type="transmembrane region" description="Helical; Name=4" evidence="1">
    <location>
        <begin position="144"/>
        <end position="164"/>
    </location>
</feature>
<feature type="topological domain" description="Cytoplasmic" evidence="6">
    <location>
        <begin position="165"/>
        <end position="186"/>
    </location>
</feature>
<feature type="transmembrane region" description="Helical; Name=5" evidence="1">
    <location>
        <begin position="187"/>
        <end position="207"/>
    </location>
</feature>
<feature type="topological domain" description="Extracellular" evidence="6">
    <location>
        <begin position="208"/>
        <end position="237"/>
    </location>
</feature>
<feature type="transmembrane region" description="Helical; Name=6" evidence="1">
    <location>
        <begin position="238"/>
        <end position="258"/>
    </location>
</feature>
<feature type="topological domain" description="Cytoplasmic" evidence="6">
    <location>
        <begin position="259"/>
        <end position="325"/>
    </location>
</feature>
<feature type="transmembrane region" description="Helical; Name=7" evidence="1">
    <location>
        <begin position="326"/>
        <end position="346"/>
    </location>
</feature>
<feature type="topological domain" description="Extracellular" evidence="6">
    <location>
        <begin position="347"/>
        <end position="374"/>
    </location>
</feature>
<feature type="transmembrane region" description="Helical; Name=8" evidence="1">
    <location>
        <begin position="375"/>
        <end position="395"/>
    </location>
</feature>
<feature type="topological domain" description="Cytoplasmic" evidence="6">
    <location>
        <begin position="396"/>
        <end position="403"/>
    </location>
</feature>
<feature type="transmembrane region" description="Helical; Name=9" evidence="1">
    <location>
        <begin position="404"/>
        <end position="424"/>
    </location>
</feature>
<feature type="topological domain" description="Extracellular" evidence="6">
    <location>
        <begin position="425"/>
        <end position="433"/>
    </location>
</feature>
<feature type="transmembrane region" description="Helical; Name=10" evidence="1">
    <location>
        <begin position="434"/>
        <end position="454"/>
    </location>
</feature>
<feature type="topological domain" description="Cytoplasmic" evidence="6">
    <location>
        <begin position="455"/>
        <end position="468"/>
    </location>
</feature>
<feature type="transmembrane region" description="Helical; Name=11" evidence="1">
    <location>
        <begin position="469"/>
        <end position="489"/>
    </location>
</feature>
<feature type="topological domain" description="Extracellular" evidence="6">
    <location>
        <begin position="490"/>
        <end position="505"/>
    </location>
</feature>
<feature type="transmembrane region" description="Helical; Name=12" evidence="1">
    <location>
        <begin position="506"/>
        <end position="526"/>
    </location>
</feature>
<feature type="topological domain" description="Cytoplasmic" evidence="6">
    <location>
        <begin position="527"/>
        <end position="570"/>
    </location>
</feature>
<feature type="region of interest" description="Disordered" evidence="2">
    <location>
        <begin position="537"/>
        <end position="570"/>
    </location>
</feature>
<feature type="compositionally biased region" description="Acidic residues" evidence="2">
    <location>
        <begin position="537"/>
        <end position="546"/>
    </location>
</feature>
<feature type="compositionally biased region" description="Basic and acidic residues" evidence="2">
    <location>
        <begin position="547"/>
        <end position="560"/>
    </location>
</feature>
<feature type="compositionally biased region" description="Polar residues" evidence="2">
    <location>
        <begin position="561"/>
        <end position="570"/>
    </location>
</feature>
<protein>
    <recommendedName>
        <fullName evidence="5">Repressible high-affinity phosphate permease</fullName>
    </recommendedName>
</protein>